<gene>
    <name evidence="1" type="primary">coaD</name>
    <name type="ordered locus">Rxyl_1373</name>
</gene>
<dbReference type="EC" id="2.7.7.3" evidence="1"/>
<dbReference type="EMBL" id="CP000386">
    <property type="protein sequence ID" value="ABG04336.1"/>
    <property type="molecule type" value="Genomic_DNA"/>
</dbReference>
<dbReference type="RefSeq" id="WP_011564353.1">
    <property type="nucleotide sequence ID" value="NC_008148.1"/>
</dbReference>
<dbReference type="SMR" id="Q1AW92"/>
<dbReference type="STRING" id="266117.Rxyl_1373"/>
<dbReference type="KEGG" id="rxy:Rxyl_1373"/>
<dbReference type="eggNOG" id="COG0669">
    <property type="taxonomic scope" value="Bacteria"/>
</dbReference>
<dbReference type="HOGENOM" id="CLU_100149_0_1_11"/>
<dbReference type="OrthoDB" id="9806661at2"/>
<dbReference type="PhylomeDB" id="Q1AW92"/>
<dbReference type="UniPathway" id="UPA00241">
    <property type="reaction ID" value="UER00355"/>
</dbReference>
<dbReference type="Proteomes" id="UP000006637">
    <property type="component" value="Chromosome"/>
</dbReference>
<dbReference type="GO" id="GO:0005737">
    <property type="term" value="C:cytoplasm"/>
    <property type="evidence" value="ECO:0007669"/>
    <property type="project" value="UniProtKB-SubCell"/>
</dbReference>
<dbReference type="GO" id="GO:0005524">
    <property type="term" value="F:ATP binding"/>
    <property type="evidence" value="ECO:0007669"/>
    <property type="project" value="UniProtKB-KW"/>
</dbReference>
<dbReference type="GO" id="GO:0004595">
    <property type="term" value="F:pantetheine-phosphate adenylyltransferase activity"/>
    <property type="evidence" value="ECO:0007669"/>
    <property type="project" value="UniProtKB-UniRule"/>
</dbReference>
<dbReference type="GO" id="GO:0015937">
    <property type="term" value="P:coenzyme A biosynthetic process"/>
    <property type="evidence" value="ECO:0007669"/>
    <property type="project" value="UniProtKB-UniRule"/>
</dbReference>
<dbReference type="CDD" id="cd02163">
    <property type="entry name" value="PPAT"/>
    <property type="match status" value="1"/>
</dbReference>
<dbReference type="Gene3D" id="3.40.50.620">
    <property type="entry name" value="HUPs"/>
    <property type="match status" value="1"/>
</dbReference>
<dbReference type="HAMAP" id="MF_00151">
    <property type="entry name" value="PPAT_bact"/>
    <property type="match status" value="1"/>
</dbReference>
<dbReference type="InterPro" id="IPR004821">
    <property type="entry name" value="Cyt_trans-like"/>
</dbReference>
<dbReference type="InterPro" id="IPR001980">
    <property type="entry name" value="PPAT"/>
</dbReference>
<dbReference type="InterPro" id="IPR014729">
    <property type="entry name" value="Rossmann-like_a/b/a_fold"/>
</dbReference>
<dbReference type="NCBIfam" id="TIGR01510">
    <property type="entry name" value="coaD_prev_kdtB"/>
    <property type="match status" value="1"/>
</dbReference>
<dbReference type="NCBIfam" id="TIGR00125">
    <property type="entry name" value="cyt_tran_rel"/>
    <property type="match status" value="1"/>
</dbReference>
<dbReference type="PANTHER" id="PTHR21342">
    <property type="entry name" value="PHOSPHOPANTETHEINE ADENYLYLTRANSFERASE"/>
    <property type="match status" value="1"/>
</dbReference>
<dbReference type="PANTHER" id="PTHR21342:SF1">
    <property type="entry name" value="PHOSPHOPANTETHEINE ADENYLYLTRANSFERASE"/>
    <property type="match status" value="1"/>
</dbReference>
<dbReference type="Pfam" id="PF01467">
    <property type="entry name" value="CTP_transf_like"/>
    <property type="match status" value="1"/>
</dbReference>
<dbReference type="PRINTS" id="PR01020">
    <property type="entry name" value="LPSBIOSNTHSS"/>
</dbReference>
<dbReference type="SUPFAM" id="SSF52374">
    <property type="entry name" value="Nucleotidylyl transferase"/>
    <property type="match status" value="1"/>
</dbReference>
<protein>
    <recommendedName>
        <fullName evidence="1">Phosphopantetheine adenylyltransferase</fullName>
        <ecNumber evidence="1">2.7.7.3</ecNumber>
    </recommendedName>
    <alternativeName>
        <fullName evidence="1">Dephospho-CoA pyrophosphorylase</fullName>
    </alternativeName>
    <alternativeName>
        <fullName evidence="1">Pantetheine-phosphate adenylyltransferase</fullName>
        <shortName evidence="1">PPAT</shortName>
    </alternativeName>
</protein>
<accession>Q1AW92</accession>
<feature type="chain" id="PRO_1000011225" description="Phosphopantetheine adenylyltransferase">
    <location>
        <begin position="1"/>
        <end position="164"/>
    </location>
</feature>
<feature type="binding site" evidence="1">
    <location>
        <begin position="9"/>
        <end position="10"/>
    </location>
    <ligand>
        <name>ATP</name>
        <dbReference type="ChEBI" id="CHEBI:30616"/>
    </ligand>
</feature>
<feature type="binding site" evidence="1">
    <location>
        <position position="9"/>
    </location>
    <ligand>
        <name>substrate</name>
    </ligand>
</feature>
<feature type="binding site" evidence="1">
    <location>
        <position position="17"/>
    </location>
    <ligand>
        <name>ATP</name>
        <dbReference type="ChEBI" id="CHEBI:30616"/>
    </ligand>
</feature>
<feature type="binding site" evidence="1">
    <location>
        <position position="41"/>
    </location>
    <ligand>
        <name>substrate</name>
    </ligand>
</feature>
<feature type="binding site" evidence="1">
    <location>
        <position position="73"/>
    </location>
    <ligand>
        <name>substrate</name>
    </ligand>
</feature>
<feature type="binding site" evidence="1">
    <location>
        <position position="87"/>
    </location>
    <ligand>
        <name>substrate</name>
    </ligand>
</feature>
<feature type="binding site" evidence="1">
    <location>
        <begin position="88"/>
        <end position="90"/>
    </location>
    <ligand>
        <name>ATP</name>
        <dbReference type="ChEBI" id="CHEBI:30616"/>
    </ligand>
</feature>
<feature type="binding site" evidence="1">
    <location>
        <position position="98"/>
    </location>
    <ligand>
        <name>ATP</name>
        <dbReference type="ChEBI" id="CHEBI:30616"/>
    </ligand>
</feature>
<feature type="binding site" evidence="1">
    <location>
        <begin position="123"/>
        <end position="129"/>
    </location>
    <ligand>
        <name>ATP</name>
        <dbReference type="ChEBI" id="CHEBI:30616"/>
    </ligand>
</feature>
<feature type="site" description="Transition state stabilizer" evidence="1">
    <location>
        <position position="17"/>
    </location>
</feature>
<reference key="1">
    <citation type="submission" date="2006-06" db="EMBL/GenBank/DDBJ databases">
        <title>Complete sequence of Rubrobacter xylanophilus DSM 9941.</title>
        <authorList>
            <consortium name="US DOE Joint Genome Institute"/>
            <person name="Copeland A."/>
            <person name="Lucas S."/>
            <person name="Lapidus A."/>
            <person name="Barry K."/>
            <person name="Detter J.C."/>
            <person name="Glavina del Rio T."/>
            <person name="Hammon N."/>
            <person name="Israni S."/>
            <person name="Dalin E."/>
            <person name="Tice H."/>
            <person name="Pitluck S."/>
            <person name="Munk A.C."/>
            <person name="Brettin T."/>
            <person name="Bruce D."/>
            <person name="Han C."/>
            <person name="Tapia R."/>
            <person name="Gilna P."/>
            <person name="Schmutz J."/>
            <person name="Larimer F."/>
            <person name="Land M."/>
            <person name="Hauser L."/>
            <person name="Kyrpides N."/>
            <person name="Lykidis A."/>
            <person name="da Costa M.S."/>
            <person name="Rainey F.A."/>
            <person name="Empadinhas N."/>
            <person name="Jolivet E."/>
            <person name="Battista J.R."/>
            <person name="Richardson P."/>
        </authorList>
    </citation>
    <scope>NUCLEOTIDE SEQUENCE [LARGE SCALE GENOMIC DNA]</scope>
    <source>
        <strain>DSM 9941 / JCM 11954 / NBRC 16129 / PRD-1</strain>
    </source>
</reference>
<keyword id="KW-0067">ATP-binding</keyword>
<keyword id="KW-0173">Coenzyme A biosynthesis</keyword>
<keyword id="KW-0963">Cytoplasm</keyword>
<keyword id="KW-0460">Magnesium</keyword>
<keyword id="KW-0547">Nucleotide-binding</keyword>
<keyword id="KW-0548">Nucleotidyltransferase</keyword>
<keyword id="KW-1185">Reference proteome</keyword>
<keyword id="KW-0808">Transferase</keyword>
<proteinExistence type="inferred from homology"/>
<name>COAD_RUBXD</name>
<sequence length="164" mass="17982">MNIAICPGSFDPITTGHLDIIRRASKLFDHVVVAVGSNLRKQPRLSAAERARLIEKVTADLENVSVEVMEGLLVDFAREQGARVVVKGLRAVSDFESEFEQAQLNRTLYPELETVFIMSASQHSFLSSSAVREIAALGGDVRGLVPDGILETVRQIYSRSDGKI</sequence>
<evidence type="ECO:0000255" key="1">
    <source>
        <dbReference type="HAMAP-Rule" id="MF_00151"/>
    </source>
</evidence>
<comment type="function">
    <text evidence="1">Reversibly transfers an adenylyl group from ATP to 4'-phosphopantetheine, yielding dephospho-CoA (dPCoA) and pyrophosphate.</text>
</comment>
<comment type="catalytic activity">
    <reaction evidence="1">
        <text>(R)-4'-phosphopantetheine + ATP + H(+) = 3'-dephospho-CoA + diphosphate</text>
        <dbReference type="Rhea" id="RHEA:19801"/>
        <dbReference type="ChEBI" id="CHEBI:15378"/>
        <dbReference type="ChEBI" id="CHEBI:30616"/>
        <dbReference type="ChEBI" id="CHEBI:33019"/>
        <dbReference type="ChEBI" id="CHEBI:57328"/>
        <dbReference type="ChEBI" id="CHEBI:61723"/>
        <dbReference type="EC" id="2.7.7.3"/>
    </reaction>
</comment>
<comment type="cofactor">
    <cofactor evidence="1">
        <name>Mg(2+)</name>
        <dbReference type="ChEBI" id="CHEBI:18420"/>
    </cofactor>
</comment>
<comment type="pathway">
    <text evidence="1">Cofactor biosynthesis; coenzyme A biosynthesis; CoA from (R)-pantothenate: step 4/5.</text>
</comment>
<comment type="subunit">
    <text evidence="1">Homohexamer.</text>
</comment>
<comment type="subcellular location">
    <subcellularLocation>
        <location evidence="1">Cytoplasm</location>
    </subcellularLocation>
</comment>
<comment type="similarity">
    <text evidence="1">Belongs to the bacterial CoaD family.</text>
</comment>
<organism>
    <name type="scientific">Rubrobacter xylanophilus (strain DSM 9941 / JCM 11954 / NBRC 16129 / PRD-1)</name>
    <dbReference type="NCBI Taxonomy" id="266117"/>
    <lineage>
        <taxon>Bacteria</taxon>
        <taxon>Bacillati</taxon>
        <taxon>Actinomycetota</taxon>
        <taxon>Rubrobacteria</taxon>
        <taxon>Rubrobacterales</taxon>
        <taxon>Rubrobacteraceae</taxon>
        <taxon>Rubrobacter</taxon>
    </lineage>
</organism>